<gene>
    <name evidence="1" type="primary">pepA</name>
    <name type="ordered locus">ACIAD0253</name>
</gene>
<name>AMPA_ACIAD</name>
<protein>
    <recommendedName>
        <fullName evidence="1">Probable cytosol aminopeptidase</fullName>
        <ecNumber evidence="1">3.4.11.1</ecNumber>
    </recommendedName>
    <alternativeName>
        <fullName evidence="1">Leucine aminopeptidase</fullName>
        <shortName evidence="1">LAP</shortName>
        <ecNumber evidence="1">3.4.11.10</ecNumber>
    </alternativeName>
    <alternativeName>
        <fullName evidence="1">Leucyl aminopeptidase</fullName>
    </alternativeName>
</protein>
<keyword id="KW-0031">Aminopeptidase</keyword>
<keyword id="KW-0963">Cytoplasm</keyword>
<keyword id="KW-0378">Hydrolase</keyword>
<keyword id="KW-0464">Manganese</keyword>
<keyword id="KW-0479">Metal-binding</keyword>
<keyword id="KW-0645">Protease</keyword>
<accession>Q6FFD8</accession>
<feature type="chain" id="PRO_0000165714" description="Probable cytosol aminopeptidase">
    <location>
        <begin position="1"/>
        <end position="482"/>
    </location>
</feature>
<feature type="active site" evidence="1">
    <location>
        <position position="263"/>
    </location>
</feature>
<feature type="active site" evidence="1">
    <location>
        <position position="337"/>
    </location>
</feature>
<feature type="binding site" evidence="1">
    <location>
        <position position="251"/>
    </location>
    <ligand>
        <name>Mn(2+)</name>
        <dbReference type="ChEBI" id="CHEBI:29035"/>
        <label>2</label>
    </ligand>
</feature>
<feature type="binding site" evidence="1">
    <location>
        <position position="256"/>
    </location>
    <ligand>
        <name>Mn(2+)</name>
        <dbReference type="ChEBI" id="CHEBI:29035"/>
        <label>1</label>
    </ligand>
</feature>
<feature type="binding site" evidence="1">
    <location>
        <position position="256"/>
    </location>
    <ligand>
        <name>Mn(2+)</name>
        <dbReference type="ChEBI" id="CHEBI:29035"/>
        <label>2</label>
    </ligand>
</feature>
<feature type="binding site" evidence="1">
    <location>
        <position position="274"/>
    </location>
    <ligand>
        <name>Mn(2+)</name>
        <dbReference type="ChEBI" id="CHEBI:29035"/>
        <label>2</label>
    </ligand>
</feature>
<feature type="binding site" evidence="1">
    <location>
        <position position="333"/>
    </location>
    <ligand>
        <name>Mn(2+)</name>
        <dbReference type="ChEBI" id="CHEBI:29035"/>
        <label>1</label>
    </ligand>
</feature>
<feature type="binding site" evidence="1">
    <location>
        <position position="335"/>
    </location>
    <ligand>
        <name>Mn(2+)</name>
        <dbReference type="ChEBI" id="CHEBI:29035"/>
        <label>1</label>
    </ligand>
</feature>
<feature type="binding site" evidence="1">
    <location>
        <position position="335"/>
    </location>
    <ligand>
        <name>Mn(2+)</name>
        <dbReference type="ChEBI" id="CHEBI:29035"/>
        <label>2</label>
    </ligand>
</feature>
<dbReference type="EC" id="3.4.11.1" evidence="1"/>
<dbReference type="EC" id="3.4.11.10" evidence="1"/>
<dbReference type="EMBL" id="CR543861">
    <property type="protein sequence ID" value="CAG67219.1"/>
    <property type="molecule type" value="Genomic_DNA"/>
</dbReference>
<dbReference type="RefSeq" id="WP_004920741.1">
    <property type="nucleotide sequence ID" value="NC_005966.1"/>
</dbReference>
<dbReference type="SMR" id="Q6FFD8"/>
<dbReference type="STRING" id="202950.GCA_001485005_00528"/>
<dbReference type="MEROPS" id="M17.003"/>
<dbReference type="GeneID" id="45232768"/>
<dbReference type="KEGG" id="aci:ACIAD0253"/>
<dbReference type="eggNOG" id="COG0260">
    <property type="taxonomic scope" value="Bacteria"/>
</dbReference>
<dbReference type="HOGENOM" id="CLU_013734_0_1_6"/>
<dbReference type="OrthoDB" id="9809354at2"/>
<dbReference type="BioCyc" id="ASP62977:ACIAD_RS01195-MONOMER"/>
<dbReference type="Proteomes" id="UP000000430">
    <property type="component" value="Chromosome"/>
</dbReference>
<dbReference type="GO" id="GO:0005737">
    <property type="term" value="C:cytoplasm"/>
    <property type="evidence" value="ECO:0007669"/>
    <property type="project" value="UniProtKB-SubCell"/>
</dbReference>
<dbReference type="GO" id="GO:0030145">
    <property type="term" value="F:manganese ion binding"/>
    <property type="evidence" value="ECO:0007669"/>
    <property type="project" value="UniProtKB-UniRule"/>
</dbReference>
<dbReference type="GO" id="GO:0070006">
    <property type="term" value="F:metalloaminopeptidase activity"/>
    <property type="evidence" value="ECO:0007669"/>
    <property type="project" value="InterPro"/>
</dbReference>
<dbReference type="GO" id="GO:0006508">
    <property type="term" value="P:proteolysis"/>
    <property type="evidence" value="ECO:0007669"/>
    <property type="project" value="UniProtKB-KW"/>
</dbReference>
<dbReference type="CDD" id="cd00433">
    <property type="entry name" value="Peptidase_M17"/>
    <property type="match status" value="1"/>
</dbReference>
<dbReference type="FunFam" id="3.40.630.10:FF:000004">
    <property type="entry name" value="Probable cytosol aminopeptidase"/>
    <property type="match status" value="1"/>
</dbReference>
<dbReference type="Gene3D" id="3.40.220.10">
    <property type="entry name" value="Leucine Aminopeptidase, subunit E, domain 1"/>
    <property type="match status" value="1"/>
</dbReference>
<dbReference type="Gene3D" id="3.40.630.10">
    <property type="entry name" value="Zn peptidases"/>
    <property type="match status" value="1"/>
</dbReference>
<dbReference type="HAMAP" id="MF_00181">
    <property type="entry name" value="Cytosol_peptidase_M17"/>
    <property type="match status" value="1"/>
</dbReference>
<dbReference type="InterPro" id="IPR011356">
    <property type="entry name" value="Leucine_aapep/pepB"/>
</dbReference>
<dbReference type="InterPro" id="IPR043472">
    <property type="entry name" value="Macro_dom-like"/>
</dbReference>
<dbReference type="InterPro" id="IPR000819">
    <property type="entry name" value="Peptidase_M17_C"/>
</dbReference>
<dbReference type="InterPro" id="IPR023042">
    <property type="entry name" value="Peptidase_M17_leu_NH2_pept"/>
</dbReference>
<dbReference type="InterPro" id="IPR008283">
    <property type="entry name" value="Peptidase_M17_N"/>
</dbReference>
<dbReference type="NCBIfam" id="NF002074">
    <property type="entry name" value="PRK00913.1-4"/>
    <property type="match status" value="1"/>
</dbReference>
<dbReference type="NCBIfam" id="NF002077">
    <property type="entry name" value="PRK00913.2-4"/>
    <property type="match status" value="1"/>
</dbReference>
<dbReference type="PANTHER" id="PTHR11963:SF23">
    <property type="entry name" value="CYTOSOL AMINOPEPTIDASE"/>
    <property type="match status" value="1"/>
</dbReference>
<dbReference type="PANTHER" id="PTHR11963">
    <property type="entry name" value="LEUCINE AMINOPEPTIDASE-RELATED"/>
    <property type="match status" value="1"/>
</dbReference>
<dbReference type="Pfam" id="PF00883">
    <property type="entry name" value="Peptidase_M17"/>
    <property type="match status" value="1"/>
</dbReference>
<dbReference type="Pfam" id="PF02789">
    <property type="entry name" value="Peptidase_M17_N"/>
    <property type="match status" value="1"/>
</dbReference>
<dbReference type="PRINTS" id="PR00481">
    <property type="entry name" value="LAMNOPPTDASE"/>
</dbReference>
<dbReference type="SUPFAM" id="SSF52949">
    <property type="entry name" value="Macro domain-like"/>
    <property type="match status" value="1"/>
</dbReference>
<dbReference type="SUPFAM" id="SSF53187">
    <property type="entry name" value="Zn-dependent exopeptidases"/>
    <property type="match status" value="1"/>
</dbReference>
<dbReference type="PROSITE" id="PS00631">
    <property type="entry name" value="CYTOSOL_AP"/>
    <property type="match status" value="1"/>
</dbReference>
<evidence type="ECO:0000255" key="1">
    <source>
        <dbReference type="HAMAP-Rule" id="MF_00181"/>
    </source>
</evidence>
<sequence length="482" mass="52317">MKFTLQSTAPQSAQHEYLLVLVTEQQLKNTADTYKINTLDTITHTSQFKSGFNEVLTLIGQAETCSYLNLVGLGDLKDLQPAKIAKLAQTIIKLVQTKFKQIHLDISALPIELHYLFALNLTQANYVFDEFKSKKSEAQLEQIHLITAQTGLTTQQLDLIQAIASGQDLARDLGNRPGNICFPEYLADQAKALAHEFPELLKVTILDEQQMADLGMNAFLAVSQGSDRPGRIITLEYNAQLEQAPVVLVGKGVTFDTGGISIKPAQGMDEMKFDMCGAASVLGTIRTLCEARLPIHVVGAVAAAENMPSGQATRPGDIVTTMSGQTVEILNTDAEGRLVLCDTLTYIKRFNPSLVIDIATLTGACVVALGKVVSGLFSPDDALAQELQQAGEQSFDRVWRLPVMDDYQELLDSPFADIANIGGPYGGAITAACFLQRFTRDYRWAHLDIAGTAWLSGTAKGATGRPVPLLVQFLANRVGTND</sequence>
<comment type="function">
    <text evidence="1">Presumably involved in the processing and regular turnover of intracellular proteins. Catalyzes the removal of unsubstituted N-terminal amino acids from various peptides.</text>
</comment>
<comment type="catalytic activity">
    <reaction evidence="1">
        <text>Release of an N-terminal amino acid, Xaa-|-Yaa-, in which Xaa is preferably Leu, but may be other amino acids including Pro although not Arg or Lys, and Yaa may be Pro. Amino acid amides and methyl esters are also readily hydrolyzed, but rates on arylamides are exceedingly low.</text>
        <dbReference type="EC" id="3.4.11.1"/>
    </reaction>
</comment>
<comment type="catalytic activity">
    <reaction evidence="1">
        <text>Release of an N-terminal amino acid, preferentially leucine, but not glutamic or aspartic acids.</text>
        <dbReference type="EC" id="3.4.11.10"/>
    </reaction>
</comment>
<comment type="cofactor">
    <cofactor evidence="1">
        <name>Mn(2+)</name>
        <dbReference type="ChEBI" id="CHEBI:29035"/>
    </cofactor>
    <text evidence="1">Binds 2 manganese ions per subunit.</text>
</comment>
<comment type="subcellular location">
    <subcellularLocation>
        <location evidence="1">Cytoplasm</location>
    </subcellularLocation>
</comment>
<comment type="similarity">
    <text evidence="1">Belongs to the peptidase M17 family.</text>
</comment>
<organism>
    <name type="scientific">Acinetobacter baylyi (strain ATCC 33305 / BD413 / ADP1)</name>
    <dbReference type="NCBI Taxonomy" id="62977"/>
    <lineage>
        <taxon>Bacteria</taxon>
        <taxon>Pseudomonadati</taxon>
        <taxon>Pseudomonadota</taxon>
        <taxon>Gammaproteobacteria</taxon>
        <taxon>Moraxellales</taxon>
        <taxon>Moraxellaceae</taxon>
        <taxon>Acinetobacter</taxon>
    </lineage>
</organism>
<proteinExistence type="inferred from homology"/>
<reference key="1">
    <citation type="journal article" date="2004" name="Nucleic Acids Res.">
        <title>Unique features revealed by the genome sequence of Acinetobacter sp. ADP1, a versatile and naturally transformation competent bacterium.</title>
        <authorList>
            <person name="Barbe V."/>
            <person name="Vallenet D."/>
            <person name="Fonknechten N."/>
            <person name="Kreimeyer A."/>
            <person name="Oztas S."/>
            <person name="Labarre L."/>
            <person name="Cruveiller S."/>
            <person name="Robert C."/>
            <person name="Duprat S."/>
            <person name="Wincker P."/>
            <person name="Ornston L.N."/>
            <person name="Weissenbach J."/>
            <person name="Marliere P."/>
            <person name="Cohen G.N."/>
            <person name="Medigue C."/>
        </authorList>
    </citation>
    <scope>NUCLEOTIDE SEQUENCE [LARGE SCALE GENOMIC DNA]</scope>
    <source>
        <strain>ATCC 33305 / BD413 / ADP1</strain>
    </source>
</reference>